<gene>
    <name type="primary">alr</name>
    <name type="ordered locus">PD_1823</name>
</gene>
<protein>
    <recommendedName>
        <fullName evidence="1">Alanine racemase</fullName>
        <ecNumber evidence="1">5.1.1.1</ecNumber>
    </recommendedName>
</protein>
<evidence type="ECO:0000255" key="1">
    <source>
        <dbReference type="HAMAP-Rule" id="MF_01201"/>
    </source>
</evidence>
<name>ALR_XYLFT</name>
<feature type="chain" id="PRO_0000114601" description="Alanine racemase">
    <location>
        <begin position="1"/>
        <end position="365"/>
    </location>
</feature>
<feature type="active site" description="Proton acceptor; specific for D-alanine" evidence="1">
    <location>
        <position position="36"/>
    </location>
</feature>
<feature type="active site" description="Proton acceptor; specific for L-alanine" evidence="1">
    <location>
        <position position="257"/>
    </location>
</feature>
<feature type="binding site" evidence="1">
    <location>
        <position position="132"/>
    </location>
    <ligand>
        <name>substrate</name>
    </ligand>
</feature>
<feature type="binding site" evidence="1">
    <location>
        <position position="305"/>
    </location>
    <ligand>
        <name>substrate</name>
    </ligand>
</feature>
<feature type="modified residue" description="N6-(pyridoxal phosphate)lysine" evidence="1">
    <location>
        <position position="36"/>
    </location>
</feature>
<dbReference type="EC" id="5.1.1.1" evidence="1"/>
<dbReference type="EMBL" id="AE009442">
    <property type="protein sequence ID" value="AAO29656.1"/>
    <property type="molecule type" value="Genomic_DNA"/>
</dbReference>
<dbReference type="SMR" id="Q87AK1"/>
<dbReference type="KEGG" id="xft:PD_1823"/>
<dbReference type="HOGENOM" id="CLU_028393_1_0_6"/>
<dbReference type="UniPathway" id="UPA00042">
    <property type="reaction ID" value="UER00497"/>
</dbReference>
<dbReference type="Proteomes" id="UP000002516">
    <property type="component" value="Chromosome"/>
</dbReference>
<dbReference type="GO" id="GO:0005829">
    <property type="term" value="C:cytosol"/>
    <property type="evidence" value="ECO:0007669"/>
    <property type="project" value="TreeGrafter"/>
</dbReference>
<dbReference type="GO" id="GO:0008784">
    <property type="term" value="F:alanine racemase activity"/>
    <property type="evidence" value="ECO:0007669"/>
    <property type="project" value="UniProtKB-UniRule"/>
</dbReference>
<dbReference type="GO" id="GO:0030170">
    <property type="term" value="F:pyridoxal phosphate binding"/>
    <property type="evidence" value="ECO:0007669"/>
    <property type="project" value="UniProtKB-UniRule"/>
</dbReference>
<dbReference type="GO" id="GO:0030632">
    <property type="term" value="P:D-alanine biosynthetic process"/>
    <property type="evidence" value="ECO:0007669"/>
    <property type="project" value="UniProtKB-UniRule"/>
</dbReference>
<dbReference type="CDD" id="cd06827">
    <property type="entry name" value="PLPDE_III_AR_proteobact"/>
    <property type="match status" value="1"/>
</dbReference>
<dbReference type="FunFam" id="2.40.37.10:FF:000002">
    <property type="entry name" value="Alanine racemase"/>
    <property type="match status" value="1"/>
</dbReference>
<dbReference type="FunFam" id="3.20.20.10:FF:000002">
    <property type="entry name" value="Alanine racemase"/>
    <property type="match status" value="1"/>
</dbReference>
<dbReference type="Gene3D" id="3.20.20.10">
    <property type="entry name" value="Alanine racemase"/>
    <property type="match status" value="1"/>
</dbReference>
<dbReference type="Gene3D" id="2.40.37.10">
    <property type="entry name" value="Lyase, Ornithine Decarboxylase, Chain A, domain 1"/>
    <property type="match status" value="1"/>
</dbReference>
<dbReference type="HAMAP" id="MF_01201">
    <property type="entry name" value="Ala_racemase"/>
    <property type="match status" value="1"/>
</dbReference>
<dbReference type="InterPro" id="IPR000821">
    <property type="entry name" value="Ala_racemase"/>
</dbReference>
<dbReference type="InterPro" id="IPR009006">
    <property type="entry name" value="Ala_racemase/Decarboxylase_C"/>
</dbReference>
<dbReference type="InterPro" id="IPR011079">
    <property type="entry name" value="Ala_racemase_C"/>
</dbReference>
<dbReference type="InterPro" id="IPR001608">
    <property type="entry name" value="Ala_racemase_N"/>
</dbReference>
<dbReference type="InterPro" id="IPR020622">
    <property type="entry name" value="Ala_racemase_pyridoxalP-BS"/>
</dbReference>
<dbReference type="InterPro" id="IPR029066">
    <property type="entry name" value="PLP-binding_barrel"/>
</dbReference>
<dbReference type="NCBIfam" id="TIGR00492">
    <property type="entry name" value="alr"/>
    <property type="match status" value="1"/>
</dbReference>
<dbReference type="PANTHER" id="PTHR30511">
    <property type="entry name" value="ALANINE RACEMASE"/>
    <property type="match status" value="1"/>
</dbReference>
<dbReference type="PANTHER" id="PTHR30511:SF0">
    <property type="entry name" value="ALANINE RACEMASE, CATABOLIC-RELATED"/>
    <property type="match status" value="1"/>
</dbReference>
<dbReference type="Pfam" id="PF00842">
    <property type="entry name" value="Ala_racemase_C"/>
    <property type="match status" value="1"/>
</dbReference>
<dbReference type="Pfam" id="PF01168">
    <property type="entry name" value="Ala_racemase_N"/>
    <property type="match status" value="1"/>
</dbReference>
<dbReference type="PRINTS" id="PR00992">
    <property type="entry name" value="ALARACEMASE"/>
</dbReference>
<dbReference type="SMART" id="SM01005">
    <property type="entry name" value="Ala_racemase_C"/>
    <property type="match status" value="1"/>
</dbReference>
<dbReference type="SUPFAM" id="SSF50621">
    <property type="entry name" value="Alanine racemase C-terminal domain-like"/>
    <property type="match status" value="1"/>
</dbReference>
<dbReference type="SUPFAM" id="SSF51419">
    <property type="entry name" value="PLP-binding barrel"/>
    <property type="match status" value="1"/>
</dbReference>
<dbReference type="PROSITE" id="PS00395">
    <property type="entry name" value="ALANINE_RACEMASE"/>
    <property type="match status" value="1"/>
</dbReference>
<keyword id="KW-0413">Isomerase</keyword>
<keyword id="KW-0663">Pyridoxal phosphate</keyword>
<keyword id="KW-1185">Reference proteome</keyword>
<reference key="1">
    <citation type="journal article" date="2003" name="J. Bacteriol.">
        <title>Comparative analyses of the complete genome sequences of Pierce's disease and citrus variegated chlorosis strains of Xylella fastidiosa.</title>
        <authorList>
            <person name="Van Sluys M.A."/>
            <person name="de Oliveira M.C."/>
            <person name="Monteiro-Vitorello C.B."/>
            <person name="Miyaki C.Y."/>
            <person name="Furlan L.R."/>
            <person name="Camargo L.E.A."/>
            <person name="da Silva A.C.R."/>
            <person name="Moon D.H."/>
            <person name="Takita M.A."/>
            <person name="Lemos E.G.M."/>
            <person name="Machado M.A."/>
            <person name="Ferro M.I.T."/>
            <person name="da Silva F.R."/>
            <person name="Goldman M.H.S."/>
            <person name="Goldman G.H."/>
            <person name="Lemos M.V.F."/>
            <person name="El-Dorry H."/>
            <person name="Tsai S.M."/>
            <person name="Carrer H."/>
            <person name="Carraro D.M."/>
            <person name="de Oliveira R.C."/>
            <person name="Nunes L.R."/>
            <person name="Siqueira W.J."/>
            <person name="Coutinho L.L."/>
            <person name="Kimura E.T."/>
            <person name="Ferro E.S."/>
            <person name="Harakava R."/>
            <person name="Kuramae E.E."/>
            <person name="Marino C.L."/>
            <person name="Giglioti E."/>
            <person name="Abreu I.L."/>
            <person name="Alves L.M.C."/>
            <person name="do Amaral A.M."/>
            <person name="Baia G.S."/>
            <person name="Blanco S.R."/>
            <person name="Brito M.S."/>
            <person name="Cannavan F.S."/>
            <person name="Celestino A.V."/>
            <person name="da Cunha A.F."/>
            <person name="Fenille R.C."/>
            <person name="Ferro J.A."/>
            <person name="Formighieri E.F."/>
            <person name="Kishi L.T."/>
            <person name="Leoni S.G."/>
            <person name="Oliveira A.R."/>
            <person name="Rosa V.E. Jr."/>
            <person name="Sassaki F.T."/>
            <person name="Sena J.A.D."/>
            <person name="de Souza A.A."/>
            <person name="Truffi D."/>
            <person name="Tsukumo F."/>
            <person name="Yanai G.M."/>
            <person name="Zaros L.G."/>
            <person name="Civerolo E.L."/>
            <person name="Simpson A.J.G."/>
            <person name="Almeida N.F. Jr."/>
            <person name="Setubal J.C."/>
            <person name="Kitajima J.P."/>
        </authorList>
    </citation>
    <scope>NUCLEOTIDE SEQUENCE [LARGE SCALE GENOMIC DNA]</scope>
    <source>
        <strain>Temecula1 / ATCC 700964</strain>
    </source>
</reference>
<accession>Q87AK1</accession>
<organism>
    <name type="scientific">Xylella fastidiosa (strain Temecula1 / ATCC 700964)</name>
    <dbReference type="NCBI Taxonomy" id="183190"/>
    <lineage>
        <taxon>Bacteria</taxon>
        <taxon>Pseudomonadati</taxon>
        <taxon>Pseudomonadota</taxon>
        <taxon>Gammaproteobacteria</taxon>
        <taxon>Lysobacterales</taxon>
        <taxon>Lysobacteraceae</taxon>
        <taxon>Xylella</taxon>
    </lineage>
</organism>
<proteinExistence type="inferred from homology"/>
<comment type="function">
    <text evidence="1">Catalyzes the interconversion of L-alanine and D-alanine. May also act on other amino acids.</text>
</comment>
<comment type="catalytic activity">
    <reaction evidence="1">
        <text>L-alanine = D-alanine</text>
        <dbReference type="Rhea" id="RHEA:20249"/>
        <dbReference type="ChEBI" id="CHEBI:57416"/>
        <dbReference type="ChEBI" id="CHEBI:57972"/>
        <dbReference type="EC" id="5.1.1.1"/>
    </reaction>
</comment>
<comment type="cofactor">
    <cofactor evidence="1">
        <name>pyridoxal 5'-phosphate</name>
        <dbReference type="ChEBI" id="CHEBI:597326"/>
    </cofactor>
</comment>
<comment type="pathway">
    <text evidence="1">Amino-acid biosynthesis; D-alanine biosynthesis; D-alanine from L-alanine: step 1/1.</text>
</comment>
<comment type="similarity">
    <text evidence="1">Belongs to the alanine racemase family.</text>
</comment>
<sequence length="365" mass="39445">MCSVRPAHAVIDLDALRHNYRFARRLGGGKALAVVKADAYGHGAVRCAQALEAEVDGFAVACIEEALELRQAGIQAPILLLEGFFEVEELELIAKHNLWTVIASSWQVRALAAFHSPSPIGVWLKLDSGMHRLGLEPKEFRDAWMSLHSLPQVGEVVLMTHLARADELDNPRTNEQASVFAHASQGMVAPASVCNSSGLLGWAGLYSDWGRPGLMLYGVNPISQESTSLSGPLRPVMMVYSKLIAVRELPAGEPVGYGASFVTERPTRVGVVAMGYADGYPYFAVNGTPLLVDGRVCPLIGRVSMDMLTVDLTDHPQADVGSQVQLWGVQPGVAELAAHCNLSAYQLLCGLKRVRRYYLGEMGAV</sequence>